<feature type="chain" id="PRO_0000197336" description="Cadmium-metallothionein">
    <location>
        <begin position="1"/>
        <end position="66"/>
    </location>
</feature>
<feature type="binding site" evidence="1 5">
    <location>
        <position position="9"/>
    </location>
    <ligand>
        <name>Cd(2+)</name>
        <dbReference type="ChEBI" id="CHEBI:48775"/>
        <label>1</label>
    </ligand>
</feature>
<feature type="binding site" evidence="1 5">
    <location>
        <position position="13"/>
    </location>
    <ligand>
        <name>Cd(2+)</name>
        <dbReference type="ChEBI" id="CHEBI:48775"/>
        <label>1</label>
    </ligand>
</feature>
<feature type="binding site" evidence="1 5">
    <location>
        <position position="13"/>
    </location>
    <ligand>
        <name>Cd(2+)</name>
        <dbReference type="ChEBI" id="CHEBI:48775"/>
        <label>2</label>
    </ligand>
</feature>
<feature type="binding site" evidence="1 5">
    <location>
        <position position="18"/>
    </location>
    <ligand>
        <name>Cd(2+)</name>
        <dbReference type="ChEBI" id="CHEBI:48775"/>
        <label>2</label>
    </ligand>
</feature>
<feature type="binding site" evidence="1 5">
    <location>
        <position position="20"/>
    </location>
    <ligand>
        <name>Cd(2+)</name>
        <dbReference type="ChEBI" id="CHEBI:48775"/>
        <label>3</label>
    </ligand>
</feature>
<feature type="binding site" evidence="1 5">
    <location>
        <position position="24"/>
    </location>
    <ligand>
        <name>Cd(2+)</name>
        <dbReference type="ChEBI" id="CHEBI:48775"/>
        <label>3</label>
    </ligand>
</feature>
<feature type="binding site" evidence="1 5">
    <location>
        <position position="26"/>
    </location>
    <ligand>
        <name>Cd(2+)</name>
        <dbReference type="ChEBI" id="CHEBI:48775"/>
        <label>1</label>
    </ligand>
</feature>
<feature type="binding site" evidence="1 5">
    <location>
        <position position="26"/>
    </location>
    <ligand>
        <name>Cd(2+)</name>
        <dbReference type="ChEBI" id="CHEBI:48775"/>
        <label>3</label>
    </ligand>
</feature>
<feature type="binding site" evidence="1 5">
    <location>
        <position position="30"/>
    </location>
    <ligand>
        <name>Cd(2+)</name>
        <dbReference type="ChEBI" id="CHEBI:48775"/>
        <label>1</label>
    </ligand>
</feature>
<feature type="binding site" evidence="1 5">
    <location>
        <position position="32"/>
    </location>
    <ligand>
        <name>Cd(2+)</name>
        <dbReference type="ChEBI" id="CHEBI:48775"/>
        <label>2</label>
    </ligand>
</feature>
<feature type="binding site" evidence="1 5">
    <location>
        <position position="35"/>
    </location>
    <ligand>
        <name>Cd(2+)</name>
        <dbReference type="ChEBI" id="CHEBI:48775"/>
        <label>2</label>
    </ligand>
</feature>
<feature type="binding site" evidence="1 5">
    <location>
        <position position="35"/>
    </location>
    <ligand>
        <name>Cd(2+)</name>
        <dbReference type="ChEBI" id="CHEBI:48775"/>
        <label>3</label>
    </ligand>
</feature>
<feature type="binding site" evidence="1 5">
    <location>
        <position position="38"/>
    </location>
    <ligand>
        <name>Cd(2+)</name>
        <dbReference type="ChEBI" id="CHEBI:48775"/>
        <label>4</label>
    </ligand>
</feature>
<feature type="binding site" evidence="1 5">
    <location>
        <position position="40"/>
    </location>
    <ligand>
        <name>Cd(2+)</name>
        <dbReference type="ChEBI" id="CHEBI:48775"/>
        <label>5</label>
    </ligand>
</feature>
<feature type="binding site" evidence="1 5">
    <location>
        <position position="45"/>
    </location>
    <ligand>
        <name>Cd(2+)</name>
        <dbReference type="ChEBI" id="CHEBI:48775"/>
        <label>5</label>
    </ligand>
</feature>
<feature type="binding site" evidence="1 5">
    <location>
        <position position="47"/>
    </location>
    <ligand>
        <name>Cd(2+)</name>
        <dbReference type="ChEBI" id="CHEBI:48775"/>
        <label>5</label>
    </ligand>
</feature>
<feature type="binding site" evidence="1 5">
    <location>
        <position position="47"/>
    </location>
    <ligand>
        <name>Cd(2+)</name>
        <dbReference type="ChEBI" id="CHEBI:48775"/>
        <label>6</label>
    </ligand>
</feature>
<feature type="binding site" evidence="1 5">
    <location>
        <position position="51"/>
    </location>
    <ligand>
        <name>Cd(2+)</name>
        <dbReference type="ChEBI" id="CHEBI:48775"/>
        <label>4</label>
    </ligand>
</feature>
<feature type="binding site" evidence="1 5">
    <location>
        <position position="51"/>
    </location>
    <ligand>
        <name>Cd(2+)</name>
        <dbReference type="ChEBI" id="CHEBI:48775"/>
        <label>5</label>
    </ligand>
</feature>
<feature type="binding site" evidence="1 5">
    <location>
        <position position="57"/>
    </location>
    <ligand>
        <name>Cd(2+)</name>
        <dbReference type="ChEBI" id="CHEBI:48775"/>
        <label>4</label>
    </ligand>
</feature>
<feature type="binding site" evidence="1 5">
    <location>
        <position position="59"/>
    </location>
    <ligand>
        <name>Cd(2+)</name>
        <dbReference type="ChEBI" id="CHEBI:48775"/>
        <label>6</label>
    </ligand>
</feature>
<feature type="binding site" evidence="1 5">
    <location>
        <position position="63"/>
    </location>
    <ligand>
        <name>Cd(2+)</name>
        <dbReference type="ChEBI" id="CHEBI:48775"/>
        <label>6</label>
    </ligand>
</feature>
<feature type="binding site" evidence="1 5">
    <location>
        <position position="65"/>
    </location>
    <ligand>
        <name>Cd(2+)</name>
        <dbReference type="ChEBI" id="CHEBI:48775"/>
        <label>4</label>
    </ligand>
</feature>
<feature type="binding site" evidence="1 5">
    <location>
        <position position="65"/>
    </location>
    <ligand>
        <name>Cd(2+)</name>
        <dbReference type="ChEBI" id="CHEBI:48775"/>
        <label>6</label>
    </ligand>
</feature>
<feature type="modified residue" description="N-acetylserine" evidence="2">
    <location>
        <position position="1"/>
    </location>
</feature>
<feature type="turn" evidence="6">
    <location>
        <begin position="11"/>
        <end position="14"/>
    </location>
</feature>
<feature type="strand" evidence="6">
    <location>
        <begin position="15"/>
        <end position="17"/>
    </location>
</feature>
<feature type="turn" evidence="6">
    <location>
        <begin position="21"/>
        <end position="23"/>
    </location>
</feature>
<feature type="turn" evidence="6">
    <location>
        <begin position="33"/>
        <end position="35"/>
    </location>
</feature>
<feature type="strand" evidence="6">
    <location>
        <begin position="46"/>
        <end position="50"/>
    </location>
</feature>
<feature type="helix" evidence="6">
    <location>
        <begin position="54"/>
        <end position="56"/>
    </location>
</feature>
<feature type="strand" evidence="7">
    <location>
        <begin position="61"/>
        <end position="63"/>
    </location>
</feature>
<comment type="function">
    <text>The metallothioneins are involved in the cellular sequestration of toxic metal ions and regulation of essential trace elements. Binds almost exclusively cadmium.</text>
</comment>
<comment type="induction">
    <text>By cadmium.</text>
</comment>
<comment type="domain">
    <text>14 cysteine residues are arranged in C-X-C groups. These are thought to be the metal-binding sites in other metallothioneins.</text>
</comment>
<comment type="similarity">
    <text evidence="3">Belongs to the metallothionein superfamily. Type 2 family.</text>
</comment>
<sequence>SGKGKGEKCTSACRSEPCQCGSKCQCGEGCTCAACKTCNCTSDGCKCGKECTGPDSCKCGSSCSCK</sequence>
<name>MTCD_HELPO</name>
<proteinExistence type="evidence at protein level"/>
<organism>
    <name type="scientific">Helix pomatia</name>
    <name type="common">Roman snail</name>
    <name type="synonym">Edible snail</name>
    <dbReference type="NCBI Taxonomy" id="6536"/>
    <lineage>
        <taxon>Eukaryota</taxon>
        <taxon>Metazoa</taxon>
        <taxon>Spiralia</taxon>
        <taxon>Lophotrochozoa</taxon>
        <taxon>Mollusca</taxon>
        <taxon>Gastropoda</taxon>
        <taxon>Heterobranchia</taxon>
        <taxon>Euthyneura</taxon>
        <taxon>Panpulmonata</taxon>
        <taxon>Eupulmonata</taxon>
        <taxon>Stylommatophora</taxon>
        <taxon>Helicina</taxon>
        <taxon>Helicoidea</taxon>
        <taxon>Helicidae</taxon>
        <taxon>Helix</taxon>
    </lineage>
</organism>
<keyword id="KW-0002">3D-structure</keyword>
<keyword id="KW-0007">Acetylation</keyword>
<keyword id="KW-0104">Cadmium</keyword>
<keyword id="KW-0903">Direct protein sequencing</keyword>
<keyword id="KW-0479">Metal-binding</keyword>
<keyword id="KW-0480">Metal-thiolate cluster</keyword>
<accession>P33187</accession>
<reference key="1">
    <citation type="journal article" date="1993" name="Eur. J. Biochem.">
        <title>Purification and primary structure of snail metallothionein. Similarity of the N-terminal sequence with histones H4 and H2A.</title>
        <authorList>
            <person name="Dallinger R."/>
            <person name="Berger B."/>
            <person name="Hunziker P.E."/>
            <person name="Birchler N."/>
            <person name="Hauer C.R."/>
            <person name="Kaegi J.H.R."/>
        </authorList>
    </citation>
    <scope>PROTEIN SEQUENCE</scope>
    <scope>ACETYLATION AT SER-1</scope>
    <source>
        <tissue>Midgut</tissue>
    </source>
</reference>
<reference evidence="4 5" key="2">
    <citation type="journal article" date="2019" name="Biochemistry">
        <title>The Solution Structure and Dynamics of Cd-Metallothionein from Helix pomatia Reveal Optimization for Binding Cd over Zn.</title>
        <authorList>
            <person name="Beil A."/>
            <person name="Jurt S."/>
            <person name="Walser R."/>
            <person name="Schonhut T."/>
            <person name="Guntert P."/>
            <person name="Palacios O."/>
            <person name="Atrian S."/>
            <person name="Capdevila M."/>
            <person name="Dallinger R."/>
            <person name="Zerbe O."/>
        </authorList>
    </citation>
    <scope>STRUCTURE BY NMR IN COMPLEXES WITH CADMIUM AND ZINC IONS</scope>
</reference>
<protein>
    <recommendedName>
        <fullName>Cadmium-metallothionein</fullName>
        <shortName>CD-MT</shortName>
    </recommendedName>
</protein>
<evidence type="ECO:0000269" key="1">
    <source>
    </source>
</evidence>
<evidence type="ECO:0000269" key="2">
    <source>
    </source>
</evidence>
<evidence type="ECO:0000305" key="3"/>
<evidence type="ECO:0007744" key="4">
    <source>
        <dbReference type="PDB" id="6QK5"/>
    </source>
</evidence>
<evidence type="ECO:0007744" key="5">
    <source>
        <dbReference type="PDB" id="6QK6"/>
    </source>
</evidence>
<evidence type="ECO:0007829" key="6">
    <source>
        <dbReference type="PDB" id="6QK5"/>
    </source>
</evidence>
<evidence type="ECO:0007829" key="7">
    <source>
        <dbReference type="PDB" id="6QK6"/>
    </source>
</evidence>
<dbReference type="PIR" id="S36866">
    <property type="entry name" value="S36866"/>
</dbReference>
<dbReference type="PDB" id="6QK5">
    <property type="method" value="NMR"/>
    <property type="chains" value="A=1-66"/>
</dbReference>
<dbReference type="PDB" id="6QK6">
    <property type="method" value="NMR"/>
    <property type="chains" value="A=1-66"/>
</dbReference>
<dbReference type="PDBsum" id="6QK5"/>
<dbReference type="PDBsum" id="6QK6"/>
<dbReference type="BMRB" id="P33187"/>
<dbReference type="SMR" id="P33187"/>
<dbReference type="iPTMnet" id="P33187"/>
<dbReference type="GO" id="GO:0046872">
    <property type="term" value="F:metal ion binding"/>
    <property type="evidence" value="ECO:0007669"/>
    <property type="project" value="UniProtKB-KW"/>
</dbReference>
<dbReference type="InterPro" id="IPR001008">
    <property type="entry name" value="Metalthion_mollusc"/>
</dbReference>
<dbReference type="PRINTS" id="PR00875">
    <property type="entry name" value="MTMOLLUSC"/>
</dbReference>